<name>CAS6_PSEAB</name>
<gene>
    <name type="primary">cas6f</name>
    <name type="synonym">csy4</name>
    <name type="ordered locus">PA14_33300</name>
</gene>
<comment type="function">
    <text evidence="1 3 5">CRISPR (clustered regularly interspaced short palindromic repeat) is an adaptive immune system that provides protection against mobile genetic elements (viruses, transposable elements and conjugative plasmids). CRISPR clusters contain sequences complementary to antecedent mobile elements and target invading nucleic acids. CRISPR clusters are transcribed and processed into CRISPR RNA (crRNA). Processes pre-crRNA into individual crRNA units. Absolutely required for crRNA production or stability. Upon expression in E.coli endonucleolytically processes pre-crRNA, although disruption and reconstitution experiments indicate that in situ other genes are also required for processing. Yields 5'-hydroxy and 3'-phosphate groups. The Csy ribonucleoprotein complex binds target ssDNA with high affinity but target dsDNA with much lower affinity.</text>
</comment>
<comment type="cofactor">
    <text evidence="1">Metal-ion independent.</text>
</comment>
<comment type="subunit">
    <text evidence="4 5">Part of the Csy ribonucleoprotein complex with a probable stoichiometry of Csy1(1),Csy2(1),Csy3(6),Cas6/Csy4(1)-crRNA(1). A Csy3(6),Cas6/Csy4(1)-crRNA(1) subcomplex is also formed.</text>
</comment>
<comment type="interaction">
    <interactant intactId="EBI-15924852">
        <id>Q02MM2</id>
    </interactant>
    <interactant intactId="EBI-15924841">
        <id>Q02MM1</id>
        <label>csy3</label>
    </interactant>
    <organismsDiffer>false</organismsDiffer>
    <experiments>12</experiments>
</comment>
<comment type="mass spectrometry"/>
<comment type="disruption phenotype">
    <text evidence="2 3">Infection with phage DMS3 inhibits biofilm formation; disrupting this gene restores biofilm formation despite DMS3 infection. Normal biofilm formation in the absence of phage infection. Loss of production of crRNA in the presence or absence of phage. Disruption of the entire Y.pestis-subtype CRISPR region disrupts crRNA production but does not alter phage resistance (possibly OLNs PA14_33350 to PA14_33310, plus the flanking CRISPR loci), indicating this CRISPR is not involved in phage resistance.</text>
</comment>
<comment type="miscellaneous">
    <text>In this bacteria, Y.pestis-subtype CRISPRs do not confer resistance to phage DMS3 or MP22, but instead are required for DMS3-dependent inhibition of biofilm formation and possibly motility.</text>
</comment>
<comment type="similarity">
    <text evidence="6">Belongs to the CRISPR-associated endoribonuclease Cas6 family. Cas6f/Csy4, subtype I-F/Ypest subfamily.</text>
</comment>
<comment type="sequence caution" evidence="6">
    <conflict type="erroneous initiation">
        <sequence resource="EMBL-CDS" id="ABJ11605"/>
    </conflict>
    <text>Truncated N-terminus.</text>
</comment>
<protein>
    <recommendedName>
        <fullName>CRISPR-associated endonuclease Cas6/Csy4</fullName>
        <ecNumber>3.1.-.-</ecNumber>
    </recommendedName>
</protein>
<keyword id="KW-0002">3D-structure</keyword>
<keyword id="KW-0051">Antiviral defense</keyword>
<keyword id="KW-0255">Endonuclease</keyword>
<keyword id="KW-0378">Hydrolase</keyword>
<keyword id="KW-0540">Nuclease</keyword>
<keyword id="KW-0694">RNA-binding</keyword>
<sequence>MDHYLDIRLRPDPEFPPAQLMSVLFGKLHQALVAQGGDRIGVSFPDLDESRSRLGERLRIHASADDLRALLARPWLEGLRDHLQFGEPAVVPHPTPYRQVSRVQAKSNPERLRRRLMRRHDLSEEEARKRIPDTVARALDLPFVTLRSQSTGQHFRLFIRHGPLQVTAEEGGFTCYGLSKGGFVPWF</sequence>
<feature type="chain" id="PRO_0000417882" description="CRISPR-associated endonuclease Cas6/Csy4">
    <location>
        <begin position="1"/>
        <end position="187"/>
    </location>
</feature>
<feature type="active site" description="Proton acceptor" evidence="6">
    <location>
        <position position="29"/>
    </location>
</feature>
<feature type="site" description="Substrate binding">
    <location>
        <position position="148"/>
    </location>
</feature>
<feature type="mutagenesis site" description="No pre-crRNA cleavage, still binds crRNA. Does not support formation of the Csy ribonucleoprotein complex." evidence="1 3 5">
    <original>H</original>
    <variation>A</variation>
    <location>
        <position position="29"/>
    </location>
</feature>
<feature type="mutagenesis site" description="Cleaves pre-crRNA 910-fold slower." evidence="1 3 5">
    <original>H</original>
    <variation>D</variation>
    <location>
        <position position="29"/>
    </location>
</feature>
<feature type="mutagenesis site" description="Cleaves pre-crRNA 130-fold slower." evidence="1 3 5">
    <original>H</original>
    <variation>K</variation>
    <location>
        <position position="29"/>
    </location>
</feature>
<feature type="mutagenesis site" description="No biofilm formation upon phage infection, no crRNA formed.">
    <original>E</original>
    <variation>A</variation>
    <location>
        <position position="49"/>
    </location>
</feature>
<feature type="mutagenesis site" description="Restores biofilm formation upon phage infection, crRNA forms.">
    <original>E</original>
    <variation>K</variation>
    <location>
        <position position="49"/>
    </location>
</feature>
<feature type="mutagenesis site" description="Loss of pre-crRNA cleavage, still binds crRNA." evidence="1">
    <original>R</original>
    <variation>A</variation>
    <location>
        <position position="102"/>
    </location>
</feature>
<feature type="mutagenesis site" description="No loss of pre-crRNA cleavage, still binds crRNA." evidence="1">
    <original>Q</original>
    <variation>A</variation>
    <location>
        <position position="104"/>
    </location>
</feature>
<feature type="mutagenesis site" description="Cleaves pre-crRNA 8300-fold slower." evidence="1 5">
    <original>S</original>
    <variation>A</variation>
    <location>
        <position position="148"/>
    </location>
</feature>
<feature type="mutagenesis site" description="No pre-crRNA cleavage, still binds crRNA." evidence="1 5">
    <original>S</original>
    <variation>C</variation>
    <location>
        <position position="148"/>
    </location>
</feature>
<feature type="mutagenesis site" description="Cleaves pre-crRNA 350-fold slower." evidence="5">
    <original>S</original>
    <variation>A</variation>
    <location>
        <position position="150"/>
    </location>
</feature>
<feature type="mutagenesis site" description="Cleaves pre-crRNA 380-fold slower." evidence="5">
    <original>T</original>
    <variation>A</variation>
    <location>
        <position position="151"/>
    </location>
</feature>
<feature type="mutagenesis site" description="Very little pre-crRNA cleavage, still binds crRNA." evidence="1">
    <original>F</original>
    <variation>A</variation>
    <location>
        <position position="155"/>
    </location>
</feature>
<feature type="mutagenesis site" description="Cleaves pre-crRNA 130-fold slower." evidence="5">
    <original>Y</original>
    <variation>A</variation>
    <location>
        <position position="176"/>
    </location>
</feature>
<feature type="mutagenesis site" description="Cleaves pre-crRNA 13-fold slower." evidence="5">
    <original>Y</original>
    <variation>F</variation>
    <location>
        <position position="176"/>
    </location>
</feature>
<feature type="strand" evidence="7">
    <location>
        <begin position="3"/>
        <end position="9"/>
    </location>
</feature>
<feature type="strand" evidence="7">
    <location>
        <begin position="13"/>
        <end position="15"/>
    </location>
</feature>
<feature type="helix" evidence="7">
    <location>
        <begin position="17"/>
        <end position="35"/>
    </location>
</feature>
<feature type="strand" evidence="9">
    <location>
        <begin position="38"/>
        <end position="40"/>
    </location>
</feature>
<feature type="strand" evidence="7">
    <location>
        <begin position="41"/>
        <end position="43"/>
    </location>
</feature>
<feature type="turn" evidence="7">
    <location>
        <begin position="49"/>
        <end position="52"/>
    </location>
</feature>
<feature type="strand" evidence="7">
    <location>
        <begin position="56"/>
        <end position="62"/>
    </location>
</feature>
<feature type="helix" evidence="7">
    <location>
        <begin position="64"/>
        <end position="71"/>
    </location>
</feature>
<feature type="helix" evidence="8">
    <location>
        <begin position="74"/>
        <end position="76"/>
    </location>
</feature>
<feature type="helix" evidence="7">
    <location>
        <begin position="77"/>
        <end position="82"/>
    </location>
</feature>
<feature type="strand" evidence="8">
    <location>
        <begin position="83"/>
        <end position="85"/>
    </location>
</feature>
<feature type="strand" evidence="10">
    <location>
        <begin position="93"/>
        <end position="95"/>
    </location>
</feature>
<feature type="strand" evidence="7">
    <location>
        <begin position="100"/>
        <end position="103"/>
    </location>
</feature>
<feature type="strand" evidence="10">
    <location>
        <begin position="105"/>
        <end position="107"/>
    </location>
</feature>
<feature type="helix" evidence="7">
    <location>
        <begin position="109"/>
        <end position="120"/>
    </location>
</feature>
<feature type="helix" evidence="7">
    <location>
        <begin position="124"/>
        <end position="130"/>
    </location>
</feature>
<feature type="helix" evidence="8">
    <location>
        <begin position="133"/>
        <end position="135"/>
    </location>
</feature>
<feature type="strand" evidence="7">
    <location>
        <begin position="143"/>
        <end position="147"/>
    </location>
</feature>
<feature type="turn" evidence="7">
    <location>
        <begin position="149"/>
        <end position="151"/>
    </location>
</feature>
<feature type="strand" evidence="7">
    <location>
        <begin position="154"/>
        <end position="161"/>
    </location>
</feature>
<feature type="strand" evidence="7">
    <location>
        <begin position="165"/>
        <end position="167"/>
    </location>
</feature>
<feature type="strand" evidence="11">
    <location>
        <begin position="175"/>
        <end position="177"/>
    </location>
</feature>
<feature type="strand" evidence="7">
    <location>
        <begin position="179"/>
        <end position="181"/>
    </location>
</feature>
<evidence type="ECO:0000269" key="1">
    <source>
    </source>
</evidence>
<evidence type="ECO:0000269" key="2">
    <source>
    </source>
</evidence>
<evidence type="ECO:0000269" key="3">
    <source>
    </source>
</evidence>
<evidence type="ECO:0000269" key="4">
    <source>
    </source>
</evidence>
<evidence type="ECO:0000269" key="5">
    <source>
    </source>
</evidence>
<evidence type="ECO:0000305" key="6"/>
<evidence type="ECO:0007829" key="7">
    <source>
        <dbReference type="PDB" id="2XLK"/>
    </source>
</evidence>
<evidence type="ECO:0007829" key="8">
    <source>
        <dbReference type="PDB" id="4AL5"/>
    </source>
</evidence>
<evidence type="ECO:0007829" key="9">
    <source>
        <dbReference type="PDB" id="6B45"/>
    </source>
</evidence>
<evidence type="ECO:0007829" key="10">
    <source>
        <dbReference type="PDB" id="6B47"/>
    </source>
</evidence>
<evidence type="ECO:0007829" key="11">
    <source>
        <dbReference type="PDB" id="6VQV"/>
    </source>
</evidence>
<dbReference type="EC" id="3.1.-.-"/>
<dbReference type="EMBL" id="CP000438">
    <property type="protein sequence ID" value="ABJ11605.1"/>
    <property type="status" value="ALT_INIT"/>
    <property type="molecule type" value="Genomic_DNA"/>
</dbReference>
<dbReference type="RefSeq" id="WP_016254196.1">
    <property type="nucleotide sequence ID" value="NZ_CP034244.1"/>
</dbReference>
<dbReference type="PDB" id="2XLI">
    <property type="method" value="X-ray"/>
    <property type="resolution" value="2.33 A"/>
    <property type="chains" value="A=1-187"/>
</dbReference>
<dbReference type="PDB" id="2XLJ">
    <property type="method" value="X-ray"/>
    <property type="resolution" value="2.60 A"/>
    <property type="chains" value="A=1-187"/>
</dbReference>
<dbReference type="PDB" id="2XLK">
    <property type="method" value="X-ray"/>
    <property type="resolution" value="1.80 A"/>
    <property type="chains" value="A/B=1-187"/>
</dbReference>
<dbReference type="PDB" id="4AL5">
    <property type="method" value="X-ray"/>
    <property type="resolution" value="2.00 A"/>
    <property type="chains" value="A=1-187"/>
</dbReference>
<dbReference type="PDB" id="4AL6">
    <property type="method" value="X-ray"/>
    <property type="resolution" value="2.63 A"/>
    <property type="chains" value="A=1-187"/>
</dbReference>
<dbReference type="PDB" id="4AL7">
    <property type="method" value="X-ray"/>
    <property type="resolution" value="2.32 A"/>
    <property type="chains" value="A=1-187"/>
</dbReference>
<dbReference type="PDB" id="5UZ9">
    <property type="method" value="EM"/>
    <property type="resolution" value="3.40 A"/>
    <property type="chains" value="L=1-187"/>
</dbReference>
<dbReference type="PDB" id="6B44">
    <property type="method" value="EM"/>
    <property type="resolution" value="2.90 A"/>
    <property type="chains" value="L=1-187"/>
</dbReference>
<dbReference type="PDB" id="6B45">
    <property type="method" value="EM"/>
    <property type="resolution" value="3.50 A"/>
    <property type="chains" value="L=1-187"/>
</dbReference>
<dbReference type="PDB" id="6B46">
    <property type="method" value="EM"/>
    <property type="resolution" value="3.10 A"/>
    <property type="chains" value="L=1-187"/>
</dbReference>
<dbReference type="PDB" id="6B47">
    <property type="method" value="EM"/>
    <property type="resolution" value="3.20 A"/>
    <property type="chains" value="L=1-187"/>
</dbReference>
<dbReference type="PDB" id="6B48">
    <property type="method" value="EM"/>
    <property type="resolution" value="3.60 A"/>
    <property type="chains" value="L=1-187"/>
</dbReference>
<dbReference type="PDB" id="6NE0">
    <property type="method" value="EM"/>
    <property type="resolution" value="3.40 A"/>
    <property type="chains" value="L=1-187"/>
</dbReference>
<dbReference type="PDB" id="6VQV">
    <property type="method" value="EM"/>
    <property type="resolution" value="2.57 A"/>
    <property type="chains" value="K=1-187"/>
</dbReference>
<dbReference type="PDB" id="6VQW">
    <property type="method" value="EM"/>
    <property type="resolution" value="3.42 A"/>
    <property type="chains" value="J=1-187"/>
</dbReference>
<dbReference type="PDB" id="6VQX">
    <property type="method" value="EM"/>
    <property type="resolution" value="3.15 A"/>
    <property type="chains" value="J=1-187"/>
</dbReference>
<dbReference type="PDB" id="6W1X">
    <property type="method" value="EM"/>
    <property type="resolution" value="3.90 A"/>
    <property type="chains" value="L=1-187"/>
</dbReference>
<dbReference type="PDB" id="6WHI">
    <property type="method" value="EM"/>
    <property type="resolution" value="4.20 A"/>
    <property type="chains" value="L=1-187"/>
</dbReference>
<dbReference type="PDB" id="7ECV">
    <property type="method" value="EM"/>
    <property type="resolution" value="3.43 A"/>
    <property type="chains" value="L=1-187"/>
</dbReference>
<dbReference type="PDB" id="7ELM">
    <property type="method" value="EM"/>
    <property type="resolution" value="2.88 A"/>
    <property type="chains" value="I/S=1-187"/>
</dbReference>
<dbReference type="PDB" id="7ELN">
    <property type="method" value="EM"/>
    <property type="resolution" value="3.00 A"/>
    <property type="chains" value="I/S=1-187"/>
</dbReference>
<dbReference type="PDB" id="7EQG">
    <property type="method" value="EM"/>
    <property type="resolution" value="3.20 A"/>
    <property type="chains" value="L=1-187"/>
</dbReference>
<dbReference type="PDB" id="7JZW">
    <property type="method" value="EM"/>
    <property type="resolution" value="3.20 A"/>
    <property type="chains" value="C=1-187"/>
</dbReference>
<dbReference type="PDB" id="7JZX">
    <property type="method" value="EM"/>
    <property type="resolution" value="3.40 A"/>
    <property type="chains" value="C=1-187"/>
</dbReference>
<dbReference type="PDB" id="7JZY">
    <property type="method" value="EM"/>
    <property type="resolution" value="3.60 A"/>
    <property type="chains" value="C=1-187"/>
</dbReference>
<dbReference type="PDB" id="7JZZ">
    <property type="method" value="EM"/>
    <property type="resolution" value="3.20 A"/>
    <property type="chains" value="C=1-187"/>
</dbReference>
<dbReference type="PDB" id="7T3J">
    <property type="method" value="EM"/>
    <property type="resolution" value="3.20 A"/>
    <property type="chains" value="C=1-187"/>
</dbReference>
<dbReference type="PDB" id="7T3K">
    <property type="method" value="EM"/>
    <property type="resolution" value="3.50 A"/>
    <property type="chains" value="C/c=1-187"/>
</dbReference>
<dbReference type="PDB" id="7T3L">
    <property type="method" value="EM"/>
    <property type="resolution" value="3.60 A"/>
    <property type="chains" value="C/c=1-187"/>
</dbReference>
<dbReference type="PDB" id="7TAW">
    <property type="method" value="EM"/>
    <property type="resolution" value="2.70 A"/>
    <property type="chains" value="C/c=1-187"/>
</dbReference>
<dbReference type="PDB" id="7TAX">
    <property type="method" value="EM"/>
    <property type="resolution" value="2.80 A"/>
    <property type="chains" value="C=1-187"/>
</dbReference>
<dbReference type="PDB" id="7WE6">
    <property type="method" value="EM"/>
    <property type="resolution" value="3.20 A"/>
    <property type="chains" value="I/S=1-187"/>
</dbReference>
<dbReference type="PDBsum" id="2XLI"/>
<dbReference type="PDBsum" id="2XLJ"/>
<dbReference type="PDBsum" id="2XLK"/>
<dbReference type="PDBsum" id="4AL5"/>
<dbReference type="PDBsum" id="4AL6"/>
<dbReference type="PDBsum" id="4AL7"/>
<dbReference type="PDBsum" id="5UZ9"/>
<dbReference type="PDBsum" id="6B44"/>
<dbReference type="PDBsum" id="6B45"/>
<dbReference type="PDBsum" id="6B46"/>
<dbReference type="PDBsum" id="6B47"/>
<dbReference type="PDBsum" id="6B48"/>
<dbReference type="PDBsum" id="6NE0"/>
<dbReference type="PDBsum" id="6VQV"/>
<dbReference type="PDBsum" id="6VQW"/>
<dbReference type="PDBsum" id="6VQX"/>
<dbReference type="PDBsum" id="6W1X"/>
<dbReference type="PDBsum" id="6WHI"/>
<dbReference type="PDBsum" id="7ECV"/>
<dbReference type="PDBsum" id="7ELM"/>
<dbReference type="PDBsum" id="7ELN"/>
<dbReference type="PDBsum" id="7EQG"/>
<dbReference type="PDBsum" id="7JZW"/>
<dbReference type="PDBsum" id="7JZX"/>
<dbReference type="PDBsum" id="7JZY"/>
<dbReference type="PDBsum" id="7JZZ"/>
<dbReference type="PDBsum" id="7T3J"/>
<dbReference type="PDBsum" id="7T3K"/>
<dbReference type="PDBsum" id="7T3L"/>
<dbReference type="PDBsum" id="7TAW"/>
<dbReference type="PDBsum" id="7TAX"/>
<dbReference type="PDBsum" id="7WE6"/>
<dbReference type="EMDB" id="EMD-21358"/>
<dbReference type="EMDB" id="EMD-21359"/>
<dbReference type="EMDB" id="EMD-21360"/>
<dbReference type="EMDB" id="EMD-21516"/>
<dbReference type="EMDB" id="EMD-21517"/>
<dbReference type="EMDB" id="EMD-22582"/>
<dbReference type="EMDB" id="EMD-22583"/>
<dbReference type="EMDB" id="EMD-25660"/>
<dbReference type="EMDB" id="EMD-25661"/>
<dbReference type="EMDB" id="EMD-25662"/>
<dbReference type="EMDB" id="EMD-25788"/>
<dbReference type="EMDB" id="EMD-25789"/>
<dbReference type="EMDB" id="EMD-7048"/>
<dbReference type="EMDB" id="EMD-7049"/>
<dbReference type="EMDB" id="EMD-7050"/>
<dbReference type="EMDB" id="EMD-7051"/>
<dbReference type="EMDB" id="EMD-7052"/>
<dbReference type="EMDB" id="EMD-8624"/>
<dbReference type="SMR" id="Q02MM2"/>
<dbReference type="DIP" id="DIP-59681N"/>
<dbReference type="IntAct" id="Q02MM2">
    <property type="interactions" value="6"/>
</dbReference>
<dbReference type="KEGG" id="pau:PA14_33300"/>
<dbReference type="PseudoCAP" id="PA14_33300"/>
<dbReference type="HOGENOM" id="CLU_108958_0_0_6"/>
<dbReference type="BioCyc" id="PAER208963:G1G74-2802-MONOMER"/>
<dbReference type="EvolutionaryTrace" id="Q02MM2"/>
<dbReference type="Proteomes" id="UP000000653">
    <property type="component" value="Chromosome"/>
</dbReference>
<dbReference type="GO" id="GO:0004519">
    <property type="term" value="F:endonuclease activity"/>
    <property type="evidence" value="ECO:0007669"/>
    <property type="project" value="UniProtKB-KW"/>
</dbReference>
<dbReference type="GO" id="GO:0003723">
    <property type="term" value="F:RNA binding"/>
    <property type="evidence" value="ECO:0007669"/>
    <property type="project" value="UniProtKB-KW"/>
</dbReference>
<dbReference type="GO" id="GO:0051607">
    <property type="term" value="P:defense response to virus"/>
    <property type="evidence" value="ECO:0007669"/>
    <property type="project" value="UniProtKB-KW"/>
</dbReference>
<dbReference type="GO" id="GO:0043571">
    <property type="term" value="P:maintenance of CRISPR repeat elements"/>
    <property type="evidence" value="ECO:0007669"/>
    <property type="project" value="InterPro"/>
</dbReference>
<dbReference type="CDD" id="cd09739">
    <property type="entry name" value="Cas6_I-F"/>
    <property type="match status" value="1"/>
</dbReference>
<dbReference type="Gene3D" id="3.30.70.2540">
    <property type="entry name" value="CRISPR-associated endoribonuclease Cas6/Csy4"/>
    <property type="match status" value="1"/>
</dbReference>
<dbReference type="InterPro" id="IPR013396">
    <property type="entry name" value="CRISPR-assoc_prot_Csy4"/>
</dbReference>
<dbReference type="InterPro" id="IPR042564">
    <property type="entry name" value="CRISPR-Cas6/Csy4_sf"/>
</dbReference>
<dbReference type="NCBIfam" id="TIGR02563">
    <property type="entry name" value="cas_Csy4"/>
    <property type="match status" value="1"/>
</dbReference>
<dbReference type="Pfam" id="PF09618">
    <property type="entry name" value="Cas_Csy4"/>
    <property type="match status" value="1"/>
</dbReference>
<organism>
    <name type="scientific">Pseudomonas aeruginosa (strain UCBPP-PA14)</name>
    <dbReference type="NCBI Taxonomy" id="208963"/>
    <lineage>
        <taxon>Bacteria</taxon>
        <taxon>Pseudomonadati</taxon>
        <taxon>Pseudomonadota</taxon>
        <taxon>Gammaproteobacteria</taxon>
        <taxon>Pseudomonadales</taxon>
        <taxon>Pseudomonadaceae</taxon>
        <taxon>Pseudomonas</taxon>
    </lineage>
</organism>
<reference key="1">
    <citation type="journal article" date="2006" name="Genome Biol.">
        <title>Genomic analysis reveals that Pseudomonas aeruginosa virulence is combinatorial.</title>
        <authorList>
            <person name="Lee D.G."/>
            <person name="Urbach J.M."/>
            <person name="Wu G."/>
            <person name="Liberati N.T."/>
            <person name="Feinbaum R.L."/>
            <person name="Miyata S."/>
            <person name="Diggins L.T."/>
            <person name="He J."/>
            <person name="Saucier M."/>
            <person name="Deziel E."/>
            <person name="Friedman L."/>
            <person name="Li L."/>
            <person name="Grills G."/>
            <person name="Montgomery K."/>
            <person name="Kucherlapati R."/>
            <person name="Rahme L.G."/>
            <person name="Ausubel F.M."/>
        </authorList>
    </citation>
    <scope>NUCLEOTIDE SEQUENCE [LARGE SCALE GENOMIC DNA]</scope>
    <source>
        <strain>UCBPP-PA14</strain>
    </source>
</reference>
<reference key="2">
    <citation type="journal article" date="2011" name="J. Bacteriol.">
        <title>Non-identity-mediated CRISPR-bacteriophage interaction mediated via the Csy and Cas3 proteins.</title>
        <authorList>
            <person name="Cady K.C."/>
            <person name="O'Toole G.A."/>
        </authorList>
    </citation>
    <scope>FUNCTION IN CRRNA FORMATION</scope>
    <scope>FUNCTION IN INHIBITION OF BIOFILM FORMATION</scope>
    <scope>DISRUPTION PHENOTYPE</scope>
    <scope>MUTAGENESIS OF HIS-29</scope>
    <source>
        <strain>UCBPP-PA14</strain>
    </source>
</reference>
<reference key="3">
    <citation type="journal article" date="2011" name="Microbiology">
        <title>Prevalence, conservation and functional analysis of Yersinia and Escherichia CRISPR regions in clinical Pseudomonas aeruginosa isolates.</title>
        <authorList>
            <person name="Cady K.C."/>
            <person name="White A.S."/>
            <person name="Hammond J.H."/>
            <person name="Abendroth M.D."/>
            <person name="Karthikeyan R.S."/>
            <person name="Lalitha P."/>
            <person name="Zegans M.E."/>
            <person name="O'Toole G.A."/>
        </authorList>
    </citation>
    <scope>NO ROLE IN PHAGE PROTECTION</scope>
    <scope>DISRUPTION PHENOTYPE</scope>
    <source>
        <strain>UCBPP-PA14</strain>
    </source>
</reference>
<reference key="4">
    <citation type="journal article" date="2011" name="Proc. Natl. Acad. Sci. U.S.A.">
        <title>RNA-guided complex from a bacterial immune system enhances target recognition through seed sequence interactions.</title>
        <authorList>
            <person name="Wiedenheft B."/>
            <person name="van Duijn E."/>
            <person name="Bultema J.B."/>
            <person name="Waghmare S.P."/>
            <person name="Zhou K."/>
            <person name="Barendregt A."/>
            <person name="Westphal W."/>
            <person name="Heck A.J."/>
            <person name="Boekema E.J."/>
            <person name="Dickman M.J."/>
            <person name="Doudna J.A."/>
        </authorList>
    </citation>
    <scope>SUBUNIT</scope>
    <scope>RNA-BINDING</scope>
    <scope>MASS SPECTROMETRY</scope>
    <source>
        <strain>UCBPP-PA14</strain>
    </source>
</reference>
<reference key="5">
    <citation type="journal article" date="2010" name="Science">
        <title>Sequence- and structure-specific RNA processing by a CRISPR endonuclease.</title>
        <authorList>
            <person name="Haurwitz R.E."/>
            <person name="Jinek M."/>
            <person name="Wiedenheft B."/>
            <person name="Zhou K."/>
            <person name="Doudna J.A."/>
        </authorList>
    </citation>
    <scope>X-RAY CRYSTALLOGRAPHY (1.80 ANGSTROMS)</scope>
    <scope>FUNCTION AS AN ENDONUCLEASE</scope>
    <scope>COFACTOR</scope>
    <scope>RNA-BINDING</scope>
    <scope>MUTAGENESIS OF HIS-29; ARG-102; GLN-104; SER-148 AND PHE-155</scope>
    <source>
        <strain>UCBPP-PA14</strain>
    </source>
</reference>
<reference key="6">
    <citation type="journal article" date="2012" name="EMBO J.">
        <title>Csy4 relies on an unusual catalytic dyad to position and cleave CRISPR RNA.</title>
        <authorList>
            <person name="Haurwitz R.E."/>
            <person name="Sternberg S.H."/>
            <person name="Doudna J.A."/>
        </authorList>
    </citation>
    <scope>X-RAY CRYSTALLOGRAPHY (2.0 ANGSTROMS) IN COMPLEX WITH RNA</scope>
    <scope>FUNCTION IN CRRNA FORMATION</scope>
    <scope>SUBUNIT</scope>
    <scope>RNA-BINDING</scope>
    <scope>MUTAGENESIS OF HIS-29; SER-148; SER-150; THR-151 AND TYR-176</scope>
    <source>
        <strain>UCBPP-PA14</strain>
    </source>
</reference>
<accession>Q02MM2</accession>
<proteinExistence type="evidence at protein level"/>